<reference key="1">
    <citation type="submission" date="2008-02" db="EMBL/GenBank/DDBJ databases">
        <title>Complete sequence of Shewanella woodyi ATCC 51908.</title>
        <authorList>
            <consortium name="US DOE Joint Genome Institute"/>
            <person name="Copeland A."/>
            <person name="Lucas S."/>
            <person name="Lapidus A."/>
            <person name="Glavina del Rio T."/>
            <person name="Dalin E."/>
            <person name="Tice H."/>
            <person name="Bruce D."/>
            <person name="Goodwin L."/>
            <person name="Pitluck S."/>
            <person name="Sims D."/>
            <person name="Brettin T."/>
            <person name="Detter J.C."/>
            <person name="Han C."/>
            <person name="Kuske C.R."/>
            <person name="Schmutz J."/>
            <person name="Larimer F."/>
            <person name="Land M."/>
            <person name="Hauser L."/>
            <person name="Kyrpides N."/>
            <person name="Lykidis A."/>
            <person name="Zhao J.-S."/>
            <person name="Richardson P."/>
        </authorList>
    </citation>
    <scope>NUCLEOTIDE SEQUENCE [LARGE SCALE GENOMIC DNA]</scope>
    <source>
        <strain>ATCC 51908 / MS32</strain>
    </source>
</reference>
<proteinExistence type="inferred from homology"/>
<name>THII_SHEWM</name>
<comment type="function">
    <text evidence="1">Catalyzes the ATP-dependent transfer of a sulfur to tRNA to produce 4-thiouridine in position 8 of tRNAs, which functions as a near-UV photosensor. Also catalyzes the transfer of sulfur to the sulfur carrier protein ThiS, forming ThiS-thiocarboxylate. This is a step in the synthesis of thiazole, in the thiamine biosynthesis pathway. The sulfur is donated as persulfide by IscS.</text>
</comment>
<comment type="catalytic activity">
    <reaction evidence="1">
        <text>[ThiI sulfur-carrier protein]-S-sulfanyl-L-cysteine + a uridine in tRNA + 2 reduced [2Fe-2S]-[ferredoxin] + ATP + H(+) = [ThiI sulfur-carrier protein]-L-cysteine + a 4-thiouridine in tRNA + 2 oxidized [2Fe-2S]-[ferredoxin] + AMP + diphosphate</text>
        <dbReference type="Rhea" id="RHEA:24176"/>
        <dbReference type="Rhea" id="RHEA-COMP:10000"/>
        <dbReference type="Rhea" id="RHEA-COMP:10001"/>
        <dbReference type="Rhea" id="RHEA-COMP:13337"/>
        <dbReference type="Rhea" id="RHEA-COMP:13338"/>
        <dbReference type="Rhea" id="RHEA-COMP:13339"/>
        <dbReference type="Rhea" id="RHEA-COMP:13340"/>
        <dbReference type="ChEBI" id="CHEBI:15378"/>
        <dbReference type="ChEBI" id="CHEBI:29950"/>
        <dbReference type="ChEBI" id="CHEBI:30616"/>
        <dbReference type="ChEBI" id="CHEBI:33019"/>
        <dbReference type="ChEBI" id="CHEBI:33737"/>
        <dbReference type="ChEBI" id="CHEBI:33738"/>
        <dbReference type="ChEBI" id="CHEBI:61963"/>
        <dbReference type="ChEBI" id="CHEBI:65315"/>
        <dbReference type="ChEBI" id="CHEBI:136798"/>
        <dbReference type="ChEBI" id="CHEBI:456215"/>
        <dbReference type="EC" id="2.8.1.4"/>
    </reaction>
</comment>
<comment type="catalytic activity">
    <reaction evidence="1">
        <text>[ThiS sulfur-carrier protein]-C-terminal Gly-Gly-AMP + S-sulfanyl-L-cysteinyl-[cysteine desulfurase] + AH2 = [ThiS sulfur-carrier protein]-C-terminal-Gly-aminoethanethioate + L-cysteinyl-[cysteine desulfurase] + A + AMP + 2 H(+)</text>
        <dbReference type="Rhea" id="RHEA:43340"/>
        <dbReference type="Rhea" id="RHEA-COMP:12157"/>
        <dbReference type="Rhea" id="RHEA-COMP:12158"/>
        <dbReference type="Rhea" id="RHEA-COMP:12910"/>
        <dbReference type="Rhea" id="RHEA-COMP:19908"/>
        <dbReference type="ChEBI" id="CHEBI:13193"/>
        <dbReference type="ChEBI" id="CHEBI:15378"/>
        <dbReference type="ChEBI" id="CHEBI:17499"/>
        <dbReference type="ChEBI" id="CHEBI:29950"/>
        <dbReference type="ChEBI" id="CHEBI:61963"/>
        <dbReference type="ChEBI" id="CHEBI:90618"/>
        <dbReference type="ChEBI" id="CHEBI:232372"/>
        <dbReference type="ChEBI" id="CHEBI:456215"/>
    </reaction>
</comment>
<comment type="pathway">
    <text evidence="1">Cofactor biosynthesis; thiamine diphosphate biosynthesis.</text>
</comment>
<comment type="subcellular location">
    <subcellularLocation>
        <location evidence="1">Cytoplasm</location>
    </subcellularLocation>
</comment>
<comment type="similarity">
    <text evidence="1">Belongs to the ThiI family.</text>
</comment>
<gene>
    <name evidence="1" type="primary">thiI</name>
    <name type="ordered locus">Swoo_3473</name>
</gene>
<sequence length="484" mass="54651">MKFIVKLFPEIMMKSKPVRMRFTKMLETNIRNVLKKVDETAKVKREWDKIMVLVPDDRQDLVEAFAERLACIPGIAHVLQVSESTFESVDDIYQQTLAVYKDELAGKTFCVRVKRVGNHDFRSIEVERYVGGGLNQFTEAAGVRLKNPDMTINLEIDKESLYLVSKRIEGLGGYPMATQEDVLSLISGGFDSGVSSYQFIKRGSRTHYCFFNLGGDQHEIGVKQVAYHLWQKYGESHKVKFISIPFDPVVTEILEKIDNGQMGVILKRMMMRAAAKVARKMGIQALVTGEAMGQVSSQTLTNLSIIDRCTDQLILRPLIAMDKQDIINLSRKIGTEDLSKSIPEYCGVISQRPTVKAVLSKIEAEELKFSEDLIDRVIEAAEVIDIREIATSMDTKITSTETVGDINSGEVIIDVRAPEEEEQSPLEVEGVEVKAIPFFRLATKFADLDKSKTYLLYCDRGVMSKLQALYLQEQGYDNVKVYRP</sequence>
<dbReference type="EC" id="2.8.1.4" evidence="1"/>
<dbReference type="EMBL" id="CP000961">
    <property type="protein sequence ID" value="ACA87739.1"/>
    <property type="molecule type" value="Genomic_DNA"/>
</dbReference>
<dbReference type="RefSeq" id="WP_012326073.1">
    <property type="nucleotide sequence ID" value="NC_010506.1"/>
</dbReference>
<dbReference type="SMR" id="B1KQY3"/>
<dbReference type="STRING" id="392500.Swoo_3473"/>
<dbReference type="KEGG" id="swd:Swoo_3473"/>
<dbReference type="eggNOG" id="COG0301">
    <property type="taxonomic scope" value="Bacteria"/>
</dbReference>
<dbReference type="eggNOG" id="COG0607">
    <property type="taxonomic scope" value="Bacteria"/>
</dbReference>
<dbReference type="HOGENOM" id="CLU_037952_4_1_6"/>
<dbReference type="UniPathway" id="UPA00060"/>
<dbReference type="Proteomes" id="UP000002168">
    <property type="component" value="Chromosome"/>
</dbReference>
<dbReference type="GO" id="GO:0005829">
    <property type="term" value="C:cytosol"/>
    <property type="evidence" value="ECO:0007669"/>
    <property type="project" value="TreeGrafter"/>
</dbReference>
<dbReference type="GO" id="GO:0005524">
    <property type="term" value="F:ATP binding"/>
    <property type="evidence" value="ECO:0007669"/>
    <property type="project" value="UniProtKB-UniRule"/>
</dbReference>
<dbReference type="GO" id="GO:0004810">
    <property type="term" value="F:CCA tRNA nucleotidyltransferase activity"/>
    <property type="evidence" value="ECO:0007669"/>
    <property type="project" value="InterPro"/>
</dbReference>
<dbReference type="GO" id="GO:0000049">
    <property type="term" value="F:tRNA binding"/>
    <property type="evidence" value="ECO:0007669"/>
    <property type="project" value="UniProtKB-UniRule"/>
</dbReference>
<dbReference type="GO" id="GO:0140741">
    <property type="term" value="F:tRNA-uracil-4 sulfurtransferase activity"/>
    <property type="evidence" value="ECO:0007669"/>
    <property type="project" value="UniProtKB-EC"/>
</dbReference>
<dbReference type="GO" id="GO:0009228">
    <property type="term" value="P:thiamine biosynthetic process"/>
    <property type="evidence" value="ECO:0007669"/>
    <property type="project" value="UniProtKB-KW"/>
</dbReference>
<dbReference type="GO" id="GO:0009229">
    <property type="term" value="P:thiamine diphosphate biosynthetic process"/>
    <property type="evidence" value="ECO:0007669"/>
    <property type="project" value="UniProtKB-UniRule"/>
</dbReference>
<dbReference type="GO" id="GO:0052837">
    <property type="term" value="P:thiazole biosynthetic process"/>
    <property type="evidence" value="ECO:0007669"/>
    <property type="project" value="InterPro"/>
</dbReference>
<dbReference type="GO" id="GO:0002937">
    <property type="term" value="P:tRNA 4-thiouridine biosynthesis"/>
    <property type="evidence" value="ECO:0007669"/>
    <property type="project" value="TreeGrafter"/>
</dbReference>
<dbReference type="CDD" id="cd01712">
    <property type="entry name" value="PPase_ThiI"/>
    <property type="match status" value="1"/>
</dbReference>
<dbReference type="CDD" id="cd00158">
    <property type="entry name" value="RHOD"/>
    <property type="match status" value="1"/>
</dbReference>
<dbReference type="CDD" id="cd11716">
    <property type="entry name" value="THUMP_ThiI"/>
    <property type="match status" value="1"/>
</dbReference>
<dbReference type="FunFam" id="3.40.50.620:FF:000029">
    <property type="entry name" value="tRNA sulfurtransferase"/>
    <property type="match status" value="1"/>
</dbReference>
<dbReference type="Gene3D" id="3.30.2130.30">
    <property type="match status" value="1"/>
</dbReference>
<dbReference type="Gene3D" id="3.40.50.620">
    <property type="entry name" value="HUPs"/>
    <property type="match status" value="1"/>
</dbReference>
<dbReference type="Gene3D" id="3.40.250.10">
    <property type="entry name" value="Rhodanese-like domain"/>
    <property type="match status" value="1"/>
</dbReference>
<dbReference type="HAMAP" id="MF_00021">
    <property type="entry name" value="ThiI"/>
    <property type="match status" value="1"/>
</dbReference>
<dbReference type="InterPro" id="IPR001763">
    <property type="entry name" value="Rhodanese-like_dom"/>
</dbReference>
<dbReference type="InterPro" id="IPR036873">
    <property type="entry name" value="Rhodanese-like_dom_sf"/>
</dbReference>
<dbReference type="InterPro" id="IPR014729">
    <property type="entry name" value="Rossmann-like_a/b/a_fold"/>
</dbReference>
<dbReference type="InterPro" id="IPR020536">
    <property type="entry name" value="ThiI_AANH"/>
</dbReference>
<dbReference type="InterPro" id="IPR054173">
    <property type="entry name" value="ThiI_fer"/>
</dbReference>
<dbReference type="InterPro" id="IPR049961">
    <property type="entry name" value="ThiI_N"/>
</dbReference>
<dbReference type="InterPro" id="IPR026340">
    <property type="entry name" value="THII_Thiazole_biosynth_dom"/>
</dbReference>
<dbReference type="InterPro" id="IPR004114">
    <property type="entry name" value="THUMP_dom"/>
</dbReference>
<dbReference type="InterPro" id="IPR049962">
    <property type="entry name" value="THUMP_ThiI"/>
</dbReference>
<dbReference type="InterPro" id="IPR003720">
    <property type="entry name" value="tRNA_STrfase"/>
</dbReference>
<dbReference type="InterPro" id="IPR050102">
    <property type="entry name" value="tRNA_sulfurtransferase_ThiI"/>
</dbReference>
<dbReference type="NCBIfam" id="TIGR04271">
    <property type="entry name" value="ThiI_C_thiazole"/>
    <property type="match status" value="1"/>
</dbReference>
<dbReference type="NCBIfam" id="TIGR00342">
    <property type="entry name" value="tRNA uracil 4-sulfurtransferase ThiI"/>
    <property type="match status" value="1"/>
</dbReference>
<dbReference type="PANTHER" id="PTHR43209">
    <property type="entry name" value="TRNA SULFURTRANSFERASE"/>
    <property type="match status" value="1"/>
</dbReference>
<dbReference type="PANTHER" id="PTHR43209:SF1">
    <property type="entry name" value="TRNA SULFURTRANSFERASE"/>
    <property type="match status" value="1"/>
</dbReference>
<dbReference type="Pfam" id="PF00581">
    <property type="entry name" value="Rhodanese"/>
    <property type="match status" value="1"/>
</dbReference>
<dbReference type="Pfam" id="PF02568">
    <property type="entry name" value="ThiI"/>
    <property type="match status" value="1"/>
</dbReference>
<dbReference type="Pfam" id="PF22025">
    <property type="entry name" value="ThiI_fer"/>
    <property type="match status" value="1"/>
</dbReference>
<dbReference type="Pfam" id="PF02926">
    <property type="entry name" value="THUMP"/>
    <property type="match status" value="1"/>
</dbReference>
<dbReference type="SMART" id="SM00981">
    <property type="entry name" value="THUMP"/>
    <property type="match status" value="1"/>
</dbReference>
<dbReference type="SUPFAM" id="SSF52402">
    <property type="entry name" value="Adenine nucleotide alpha hydrolases-like"/>
    <property type="match status" value="1"/>
</dbReference>
<dbReference type="SUPFAM" id="SSF52821">
    <property type="entry name" value="Rhodanese/Cell cycle control phosphatase"/>
    <property type="match status" value="1"/>
</dbReference>
<dbReference type="SUPFAM" id="SSF143437">
    <property type="entry name" value="THUMP domain-like"/>
    <property type="match status" value="1"/>
</dbReference>
<dbReference type="PROSITE" id="PS50206">
    <property type="entry name" value="RHODANESE_3"/>
    <property type="match status" value="1"/>
</dbReference>
<dbReference type="PROSITE" id="PS51165">
    <property type="entry name" value="THUMP"/>
    <property type="match status" value="1"/>
</dbReference>
<accession>B1KQY3</accession>
<evidence type="ECO:0000255" key="1">
    <source>
        <dbReference type="HAMAP-Rule" id="MF_00021"/>
    </source>
</evidence>
<feature type="chain" id="PRO_1000090035" description="tRNA sulfurtransferase">
    <location>
        <begin position="1"/>
        <end position="484"/>
    </location>
</feature>
<feature type="domain" description="THUMP" evidence="1">
    <location>
        <begin position="63"/>
        <end position="167"/>
    </location>
</feature>
<feature type="domain" description="Rhodanese" evidence="1">
    <location>
        <begin position="406"/>
        <end position="484"/>
    </location>
</feature>
<feature type="active site" description="Cysteine persulfide intermediate" evidence="1">
    <location>
        <position position="458"/>
    </location>
</feature>
<feature type="binding site" evidence="1">
    <location>
        <begin position="185"/>
        <end position="186"/>
    </location>
    <ligand>
        <name>ATP</name>
        <dbReference type="ChEBI" id="CHEBI:30616"/>
    </ligand>
</feature>
<feature type="binding site" evidence="1">
    <location>
        <position position="267"/>
    </location>
    <ligand>
        <name>ATP</name>
        <dbReference type="ChEBI" id="CHEBI:30616"/>
    </ligand>
</feature>
<feature type="binding site" evidence="1">
    <location>
        <position position="289"/>
    </location>
    <ligand>
        <name>ATP</name>
        <dbReference type="ChEBI" id="CHEBI:30616"/>
    </ligand>
</feature>
<feature type="binding site" evidence="1">
    <location>
        <position position="298"/>
    </location>
    <ligand>
        <name>ATP</name>
        <dbReference type="ChEBI" id="CHEBI:30616"/>
    </ligand>
</feature>
<feature type="disulfide bond" description="Redox-active" evidence="1">
    <location>
        <begin position="346"/>
        <end position="458"/>
    </location>
</feature>
<organism>
    <name type="scientific">Shewanella woodyi (strain ATCC 51908 / MS32)</name>
    <dbReference type="NCBI Taxonomy" id="392500"/>
    <lineage>
        <taxon>Bacteria</taxon>
        <taxon>Pseudomonadati</taxon>
        <taxon>Pseudomonadota</taxon>
        <taxon>Gammaproteobacteria</taxon>
        <taxon>Alteromonadales</taxon>
        <taxon>Shewanellaceae</taxon>
        <taxon>Shewanella</taxon>
    </lineage>
</organism>
<keyword id="KW-0067">ATP-binding</keyword>
<keyword id="KW-0963">Cytoplasm</keyword>
<keyword id="KW-1015">Disulfide bond</keyword>
<keyword id="KW-0547">Nucleotide-binding</keyword>
<keyword id="KW-0676">Redox-active center</keyword>
<keyword id="KW-1185">Reference proteome</keyword>
<keyword id="KW-0694">RNA-binding</keyword>
<keyword id="KW-0784">Thiamine biosynthesis</keyword>
<keyword id="KW-0808">Transferase</keyword>
<keyword id="KW-0820">tRNA-binding</keyword>
<protein>
    <recommendedName>
        <fullName evidence="1">tRNA sulfurtransferase</fullName>
        <ecNumber evidence="1">2.8.1.4</ecNumber>
    </recommendedName>
    <alternativeName>
        <fullName evidence="1">Sulfur carrier protein ThiS sulfurtransferase</fullName>
    </alternativeName>
    <alternativeName>
        <fullName evidence="1">Thiamine biosynthesis protein ThiI</fullName>
    </alternativeName>
    <alternativeName>
        <fullName evidence="1">tRNA 4-thiouridine synthase</fullName>
    </alternativeName>
</protein>